<proteinExistence type="evidence at transcript level"/>
<protein>
    <recommendedName>
        <fullName>CASP-like protein 1D2</fullName>
        <shortName>GmCASPL1D2</shortName>
    </recommendedName>
</protein>
<keyword id="KW-1003">Cell membrane</keyword>
<keyword id="KW-0325">Glycoprotein</keyword>
<keyword id="KW-0472">Membrane</keyword>
<keyword id="KW-1185">Reference proteome</keyword>
<keyword id="KW-0812">Transmembrane</keyword>
<keyword id="KW-1133">Transmembrane helix</keyword>
<dbReference type="EMBL" id="BT089248">
    <property type="protein sequence ID" value="ACU13328.1"/>
    <property type="molecule type" value="mRNA"/>
</dbReference>
<dbReference type="RefSeq" id="NP_001238662.1">
    <property type="nucleotide sequence ID" value="NM_001251733.2"/>
</dbReference>
<dbReference type="SMR" id="C6SVQ5"/>
<dbReference type="FunCoup" id="C6SVQ5">
    <property type="interactions" value="377"/>
</dbReference>
<dbReference type="PaxDb" id="3847-GLYMA07G38110.1"/>
<dbReference type="GeneID" id="100499706"/>
<dbReference type="KEGG" id="gmx:100499706"/>
<dbReference type="eggNOG" id="ENOG502S2UF">
    <property type="taxonomic scope" value="Eukaryota"/>
</dbReference>
<dbReference type="InParanoid" id="C6SVQ5"/>
<dbReference type="OrthoDB" id="1926504at2759"/>
<dbReference type="Proteomes" id="UP000008827">
    <property type="component" value="Unplaced"/>
</dbReference>
<dbReference type="GO" id="GO:0005886">
    <property type="term" value="C:plasma membrane"/>
    <property type="evidence" value="ECO:0007669"/>
    <property type="project" value="UniProtKB-SubCell"/>
</dbReference>
<dbReference type="InterPro" id="IPR006459">
    <property type="entry name" value="CASP/CASPL"/>
</dbReference>
<dbReference type="InterPro" id="IPR006702">
    <property type="entry name" value="CASP_dom"/>
</dbReference>
<dbReference type="InterPro" id="IPR044173">
    <property type="entry name" value="CASPL"/>
</dbReference>
<dbReference type="NCBIfam" id="TIGR01569">
    <property type="entry name" value="A_tha_TIGR01569"/>
    <property type="match status" value="1"/>
</dbReference>
<dbReference type="PANTHER" id="PTHR36488">
    <property type="entry name" value="CASP-LIKE PROTEIN 1U1"/>
    <property type="match status" value="1"/>
</dbReference>
<dbReference type="PANTHER" id="PTHR36488:SF8">
    <property type="entry name" value="CASP-LIKE PROTEIN 1U1"/>
    <property type="match status" value="1"/>
</dbReference>
<dbReference type="Pfam" id="PF04535">
    <property type="entry name" value="CASP_dom"/>
    <property type="match status" value="1"/>
</dbReference>
<feature type="chain" id="PRO_0000391561" description="CASP-like protein 1D2">
    <location>
        <begin position="1"/>
        <end position="193"/>
    </location>
</feature>
<feature type="topological domain" description="Cytoplasmic" evidence="2">
    <location>
        <begin position="1"/>
        <end position="30"/>
    </location>
</feature>
<feature type="transmembrane region" description="Helical" evidence="2">
    <location>
        <begin position="31"/>
        <end position="51"/>
    </location>
</feature>
<feature type="topological domain" description="Extracellular" evidence="2">
    <location>
        <begin position="52"/>
        <end position="73"/>
    </location>
</feature>
<feature type="transmembrane region" description="Helical" evidence="2">
    <location>
        <begin position="74"/>
        <end position="94"/>
    </location>
</feature>
<feature type="topological domain" description="Cytoplasmic" evidence="2">
    <location>
        <begin position="95"/>
        <end position="108"/>
    </location>
</feature>
<feature type="transmembrane region" description="Helical" evidence="2">
    <location>
        <begin position="109"/>
        <end position="129"/>
    </location>
</feature>
<feature type="topological domain" description="Extracellular" evidence="2">
    <location>
        <begin position="130"/>
        <end position="161"/>
    </location>
</feature>
<feature type="transmembrane region" description="Helical" evidence="2">
    <location>
        <begin position="162"/>
        <end position="182"/>
    </location>
</feature>
<feature type="topological domain" description="Cytoplasmic" evidence="2">
    <location>
        <begin position="183"/>
        <end position="193"/>
    </location>
</feature>
<feature type="glycosylation site" description="N-linked (GlcNAc...) asparagine" evidence="2">
    <location>
        <position position="52"/>
    </location>
</feature>
<name>CSPL7_SOYBN</name>
<comment type="subunit">
    <text evidence="1">Homodimer and heterodimers.</text>
</comment>
<comment type="subcellular location">
    <subcellularLocation>
        <location evidence="1">Cell membrane</location>
        <topology evidence="1">Multi-pass membrane protein</topology>
    </subcellularLocation>
</comment>
<comment type="similarity">
    <text evidence="3">Belongs to the Casparian strip membrane proteins (CASP) family.</text>
</comment>
<accession>C6SVQ5</accession>
<reference key="1">
    <citation type="submission" date="2009-08" db="EMBL/GenBank/DDBJ databases">
        <authorList>
            <person name="Cheung F."/>
            <person name="Xiao Y."/>
            <person name="Chan A."/>
            <person name="Moskal W."/>
            <person name="Town C.D."/>
        </authorList>
    </citation>
    <scope>NUCLEOTIDE SEQUENCE [LARGE SCALE MRNA]</scope>
</reference>
<reference key="2">
    <citation type="journal article" date="2014" name="Plant Physiol.">
        <title>Functional and evolutionary analysis of the CASPARIAN STRIP MEMBRANE DOMAIN PROTEIN family.</title>
        <authorList>
            <person name="Roppolo D."/>
            <person name="Boeckmann B."/>
            <person name="Pfister A."/>
            <person name="Boutet E."/>
            <person name="Rubio M.C."/>
            <person name="Denervaud-Tendon V."/>
            <person name="Vermeer J.E."/>
            <person name="Gheyselinck J."/>
            <person name="Xenarios I."/>
            <person name="Geldner N."/>
        </authorList>
    </citation>
    <scope>GENE FAMILY</scope>
    <scope>NOMENCLATURE</scope>
</reference>
<sequence>MASTDKPGGDPEYRTSSTPAPAGVDYFKFDVILRFLLFAASLVAVVVIVTANQTEVIRVPQPVPWPAKFRYSPAFVYFVAALSVTGLYSIITTLASLLASNKPALKTKLLLYFILWDALILGIIASATGTAGGVAYLGLKGNRHVVGWNKICHVYDKFCRHVGASIAVALFGSVVTVLLIWLSAYSIHSRVPK</sequence>
<organism>
    <name type="scientific">Glycine max</name>
    <name type="common">Soybean</name>
    <name type="synonym">Glycine hispida</name>
    <dbReference type="NCBI Taxonomy" id="3847"/>
    <lineage>
        <taxon>Eukaryota</taxon>
        <taxon>Viridiplantae</taxon>
        <taxon>Streptophyta</taxon>
        <taxon>Embryophyta</taxon>
        <taxon>Tracheophyta</taxon>
        <taxon>Spermatophyta</taxon>
        <taxon>Magnoliopsida</taxon>
        <taxon>eudicotyledons</taxon>
        <taxon>Gunneridae</taxon>
        <taxon>Pentapetalae</taxon>
        <taxon>rosids</taxon>
        <taxon>fabids</taxon>
        <taxon>Fabales</taxon>
        <taxon>Fabaceae</taxon>
        <taxon>Papilionoideae</taxon>
        <taxon>50 kb inversion clade</taxon>
        <taxon>NPAAA clade</taxon>
        <taxon>indigoferoid/millettioid clade</taxon>
        <taxon>Phaseoleae</taxon>
        <taxon>Glycine</taxon>
        <taxon>Glycine subgen. Soja</taxon>
    </lineage>
</organism>
<evidence type="ECO:0000250" key="1"/>
<evidence type="ECO:0000255" key="2"/>
<evidence type="ECO:0000305" key="3"/>